<comment type="function">
    <text evidence="1">Specifically methylates the uridine in position 2552 of 23S rRNA at the 2'-O position of the ribose in the fully assembled 50S ribosomal subunit.</text>
</comment>
<comment type="catalytic activity">
    <reaction evidence="1">
        <text>uridine(2552) in 23S rRNA + S-adenosyl-L-methionine = 2'-O-methyluridine(2552) in 23S rRNA + S-adenosyl-L-homocysteine + H(+)</text>
        <dbReference type="Rhea" id="RHEA:42720"/>
        <dbReference type="Rhea" id="RHEA-COMP:10202"/>
        <dbReference type="Rhea" id="RHEA-COMP:10203"/>
        <dbReference type="ChEBI" id="CHEBI:15378"/>
        <dbReference type="ChEBI" id="CHEBI:57856"/>
        <dbReference type="ChEBI" id="CHEBI:59789"/>
        <dbReference type="ChEBI" id="CHEBI:65315"/>
        <dbReference type="ChEBI" id="CHEBI:74478"/>
        <dbReference type="EC" id="2.1.1.166"/>
    </reaction>
</comment>
<comment type="subcellular location">
    <subcellularLocation>
        <location evidence="1">Cytoplasm</location>
    </subcellularLocation>
</comment>
<comment type="similarity">
    <text evidence="1">Belongs to the class I-like SAM-binding methyltransferase superfamily. RNA methyltransferase RlmE family.</text>
</comment>
<protein>
    <recommendedName>
        <fullName evidence="1">Ribosomal RNA large subunit methyltransferase E</fullName>
        <ecNumber evidence="1">2.1.1.166</ecNumber>
    </recommendedName>
    <alternativeName>
        <fullName evidence="1">23S rRNA Um2552 methyltransferase</fullName>
    </alternativeName>
    <alternativeName>
        <fullName evidence="1">rRNA (uridine-2'-O-)-methyltransferase</fullName>
    </alternativeName>
</protein>
<evidence type="ECO:0000255" key="1">
    <source>
        <dbReference type="HAMAP-Rule" id="MF_01547"/>
    </source>
</evidence>
<evidence type="ECO:0000256" key="2">
    <source>
        <dbReference type="SAM" id="MobiDB-lite"/>
    </source>
</evidence>
<gene>
    <name evidence="1" type="primary">rlmE</name>
    <name evidence="1" type="synonym">ftsJ</name>
    <name evidence="1" type="synonym">rrmJ</name>
    <name type="ordered locus">AZC_3372</name>
</gene>
<sequence length="240" mass="26110">MSSSPRSPDARPLKVRVKSARTRSSSSQKWLQRQLNDPYVARAKREGWRSRAAFKLIEMDEKLHVLKRGMRIVDLGAAPGGWSQVAAKKIGAAEGQGKIVAIDLLEMDAVTGVMFAQMDFLDPTAPERLFAMLDGKADLVMSDMAANTTGHKKTDHLKIIALVELAADFARQVLAPGGAFIAKVFQGGTEGTLLADLKRDYAQVRHLKPAASRADSAELYLVATGFRGSADRTEDETDEA</sequence>
<organism>
    <name type="scientific">Azorhizobium caulinodans (strain ATCC 43989 / DSM 5975 / JCM 20966 / LMG 6465 / NBRC 14845 / NCIMB 13405 / ORS 571)</name>
    <dbReference type="NCBI Taxonomy" id="438753"/>
    <lineage>
        <taxon>Bacteria</taxon>
        <taxon>Pseudomonadati</taxon>
        <taxon>Pseudomonadota</taxon>
        <taxon>Alphaproteobacteria</taxon>
        <taxon>Hyphomicrobiales</taxon>
        <taxon>Xanthobacteraceae</taxon>
        <taxon>Azorhizobium</taxon>
    </lineage>
</organism>
<reference key="1">
    <citation type="submission" date="2007-04" db="EMBL/GenBank/DDBJ databases">
        <title>Complete genome sequence of the nitrogen-fixing bacterium Azorhizobium caulinodans ORS571.</title>
        <authorList>
            <person name="Lee K.B."/>
            <person name="Backer P.D."/>
            <person name="Aono T."/>
            <person name="Liu C.T."/>
            <person name="Suzuki S."/>
            <person name="Suzuki T."/>
            <person name="Kaneko T."/>
            <person name="Yamada M."/>
            <person name="Tabata S."/>
            <person name="Kupfer D.M."/>
            <person name="Najar F.Z."/>
            <person name="Wiley G.B."/>
            <person name="Roe B."/>
            <person name="Binnewies T."/>
            <person name="Ussery D."/>
            <person name="Vereecke D."/>
            <person name="Gevers D."/>
            <person name="Holsters M."/>
            <person name="Oyaizu H."/>
        </authorList>
    </citation>
    <scope>NUCLEOTIDE SEQUENCE [LARGE SCALE GENOMIC DNA]</scope>
    <source>
        <strain>ATCC 43989 / DSM 5975 / JCM 20966 / LMG 6465 / NBRC 14845 / NCIMB 13405 / ORS 571</strain>
    </source>
</reference>
<keyword id="KW-0963">Cytoplasm</keyword>
<keyword id="KW-0489">Methyltransferase</keyword>
<keyword id="KW-1185">Reference proteome</keyword>
<keyword id="KW-0698">rRNA processing</keyword>
<keyword id="KW-0949">S-adenosyl-L-methionine</keyword>
<keyword id="KW-0808">Transferase</keyword>
<feature type="chain" id="PRO_1000087671" description="Ribosomal RNA large subunit methyltransferase E">
    <location>
        <begin position="1"/>
        <end position="240"/>
    </location>
</feature>
<feature type="region of interest" description="Disordered" evidence="2">
    <location>
        <begin position="1"/>
        <end position="28"/>
    </location>
</feature>
<feature type="active site" description="Proton acceptor" evidence="1">
    <location>
        <position position="183"/>
    </location>
</feature>
<feature type="binding site" evidence="1">
    <location>
        <position position="80"/>
    </location>
    <ligand>
        <name>S-adenosyl-L-methionine</name>
        <dbReference type="ChEBI" id="CHEBI:59789"/>
    </ligand>
</feature>
<feature type="binding site" evidence="1">
    <location>
        <position position="82"/>
    </location>
    <ligand>
        <name>S-adenosyl-L-methionine</name>
        <dbReference type="ChEBI" id="CHEBI:59789"/>
    </ligand>
</feature>
<feature type="binding site" evidence="1">
    <location>
        <position position="103"/>
    </location>
    <ligand>
        <name>S-adenosyl-L-methionine</name>
        <dbReference type="ChEBI" id="CHEBI:59789"/>
    </ligand>
</feature>
<feature type="binding site" evidence="1">
    <location>
        <position position="119"/>
    </location>
    <ligand>
        <name>S-adenosyl-L-methionine</name>
        <dbReference type="ChEBI" id="CHEBI:59789"/>
    </ligand>
</feature>
<feature type="binding site" evidence="1">
    <location>
        <position position="143"/>
    </location>
    <ligand>
        <name>S-adenosyl-L-methionine</name>
        <dbReference type="ChEBI" id="CHEBI:59789"/>
    </ligand>
</feature>
<dbReference type="EC" id="2.1.1.166" evidence="1"/>
<dbReference type="EMBL" id="AP009384">
    <property type="protein sequence ID" value="BAF89370.1"/>
    <property type="molecule type" value="Genomic_DNA"/>
</dbReference>
<dbReference type="RefSeq" id="WP_012171895.1">
    <property type="nucleotide sequence ID" value="NC_009937.1"/>
</dbReference>
<dbReference type="SMR" id="A8II77"/>
<dbReference type="STRING" id="438753.AZC_3372"/>
<dbReference type="KEGG" id="azc:AZC_3372"/>
<dbReference type="eggNOG" id="COG0293">
    <property type="taxonomic scope" value="Bacteria"/>
</dbReference>
<dbReference type="HOGENOM" id="CLU_009422_4_0_5"/>
<dbReference type="Proteomes" id="UP000000270">
    <property type="component" value="Chromosome"/>
</dbReference>
<dbReference type="GO" id="GO:0005737">
    <property type="term" value="C:cytoplasm"/>
    <property type="evidence" value="ECO:0007669"/>
    <property type="project" value="UniProtKB-SubCell"/>
</dbReference>
<dbReference type="GO" id="GO:0008650">
    <property type="term" value="F:rRNA (uridine-2'-O-)-methyltransferase activity"/>
    <property type="evidence" value="ECO:0007669"/>
    <property type="project" value="UniProtKB-UniRule"/>
</dbReference>
<dbReference type="FunFam" id="3.40.50.150:FF:000005">
    <property type="entry name" value="Ribosomal RNA large subunit methyltransferase E"/>
    <property type="match status" value="1"/>
</dbReference>
<dbReference type="Gene3D" id="3.40.50.150">
    <property type="entry name" value="Vaccinia Virus protein VP39"/>
    <property type="match status" value="1"/>
</dbReference>
<dbReference type="HAMAP" id="MF_01547">
    <property type="entry name" value="RNA_methyltr_E"/>
    <property type="match status" value="1"/>
</dbReference>
<dbReference type="InterPro" id="IPR050082">
    <property type="entry name" value="RNA_methyltr_RlmE"/>
</dbReference>
<dbReference type="InterPro" id="IPR002877">
    <property type="entry name" value="RNA_MeTrfase_FtsJ_dom"/>
</dbReference>
<dbReference type="InterPro" id="IPR015507">
    <property type="entry name" value="rRNA-MeTfrase_E"/>
</dbReference>
<dbReference type="InterPro" id="IPR029063">
    <property type="entry name" value="SAM-dependent_MTases_sf"/>
</dbReference>
<dbReference type="PANTHER" id="PTHR10920">
    <property type="entry name" value="RIBOSOMAL RNA METHYLTRANSFERASE"/>
    <property type="match status" value="1"/>
</dbReference>
<dbReference type="PANTHER" id="PTHR10920:SF18">
    <property type="entry name" value="RRNA METHYLTRANSFERASE 2, MITOCHONDRIAL"/>
    <property type="match status" value="1"/>
</dbReference>
<dbReference type="Pfam" id="PF01728">
    <property type="entry name" value="FtsJ"/>
    <property type="match status" value="1"/>
</dbReference>
<dbReference type="PIRSF" id="PIRSF005461">
    <property type="entry name" value="23S_rRNA_mtase"/>
    <property type="match status" value="1"/>
</dbReference>
<dbReference type="SUPFAM" id="SSF53335">
    <property type="entry name" value="S-adenosyl-L-methionine-dependent methyltransferases"/>
    <property type="match status" value="1"/>
</dbReference>
<name>RLME_AZOC5</name>
<proteinExistence type="inferred from homology"/>
<accession>A8II77</accession>